<organism evidence="13">
    <name type="scientific">Rattus norvegicus</name>
    <name type="common">Rat</name>
    <dbReference type="NCBI Taxonomy" id="10116"/>
    <lineage>
        <taxon>Eukaryota</taxon>
        <taxon>Metazoa</taxon>
        <taxon>Chordata</taxon>
        <taxon>Craniata</taxon>
        <taxon>Vertebrata</taxon>
        <taxon>Euteleostomi</taxon>
        <taxon>Mammalia</taxon>
        <taxon>Eutheria</taxon>
        <taxon>Euarchontoglires</taxon>
        <taxon>Glires</taxon>
        <taxon>Rodentia</taxon>
        <taxon>Myomorpha</taxon>
        <taxon>Muroidea</taxon>
        <taxon>Muridae</taxon>
        <taxon>Murinae</taxon>
        <taxon>Rattus</taxon>
    </lineage>
</organism>
<gene>
    <name evidence="14" type="primary">Defal1</name>
    <name evidence="6" type="synonym">Defa-rs1</name>
</gene>
<keyword id="KW-0002">3D-structure</keyword>
<keyword id="KW-0044">Antibiotic</keyword>
<keyword id="KW-0929">Antimicrobial</keyword>
<keyword id="KW-0211">Defensin</keyword>
<keyword id="KW-1015">Disulfide bond</keyword>
<keyword id="KW-1185">Reference proteome</keyword>
<keyword id="KW-0964">Secreted</keyword>
<keyword id="KW-0732">Signal</keyword>
<comment type="function">
    <text evidence="4 5">Intestinal defense peptide (PubMed:23380721, PubMed:28345637). Has potent antibacterial activity against Gram-negative bacteria E.coli O157:H7, S.typhimurium DT104, and K.pneumoniae; and against Gram-positive bacteria S.aureus, methicillin-resistant S.aureus and L.monocytogenes (PubMed:23380721, PubMed:28345637). Remains active in the presence of NaCl and Mg(2+) (PubMed:23380721). Probably functions by disrupting bacterial membrane integrity (PubMed:28345637). However, does not show cytotoxic activity towards human intestinal cells (PubMed:23380721).</text>
</comment>
<comment type="subunit">
    <text evidence="4 5">Antiparallel homodimer; disulfide-linked.</text>
</comment>
<comment type="subcellular location">
    <subcellularLocation>
        <location evidence="9 10">Secreted</location>
    </subcellularLocation>
</comment>
<comment type="tissue specificity">
    <text evidence="3 4">Specifically expressed in small intestine (jejunum and ileum) (PubMed:15494476, PubMed:23380721). Probably expressed by Paneth cells at the base of intestinal crypts (PubMed:23380721). Coexpressed with MMP7 in small intestine (PubMed:23380721).</text>
</comment>
<comment type="similarity">
    <text evidence="8">Belongs to the alpha-defensin family.</text>
</comment>
<feature type="signal peptide" evidence="1">
    <location>
        <begin position="1"/>
        <end position="19"/>
    </location>
</feature>
<feature type="propeptide" id="PRO_0000442242" evidence="9">
    <location>
        <begin position="20"/>
        <end position="56"/>
    </location>
</feature>
<feature type="peptide" id="PRO_0000442243" description="Defensin alpha-like protein 1" evidence="9">
    <location>
        <begin position="57"/>
        <end position="87"/>
    </location>
</feature>
<feature type="region of interest" description="Disordered" evidence="2">
    <location>
        <begin position="23"/>
        <end position="43"/>
    </location>
</feature>
<feature type="compositionally biased region" description="Acidic residues" evidence="2">
    <location>
        <begin position="23"/>
        <end position="41"/>
    </location>
</feature>
<feature type="disulfide bond" description="Interchain (with C-77)" evidence="5 15">
    <location>
        <position position="65"/>
    </location>
</feature>
<feature type="disulfide bond" description="Interchain (with C-75)" evidence="5 15">
    <location>
        <position position="67"/>
    </location>
</feature>
<feature type="disulfide bond" description="Interchain" evidence="5 15">
    <location>
        <position position="71"/>
    </location>
</feature>
<feature type="disulfide bond" description="Interchain (with C-67)" evidence="5 15">
    <location>
        <position position="75"/>
    </location>
</feature>
<feature type="disulfide bond" description="Interchain (with C-65)" evidence="5 15">
    <location>
        <position position="77"/>
    </location>
</feature>
<feature type="mutagenesis site" description="Aberrant protein folding and disordered structure." evidence="5">
    <original>C</original>
    <variation>S</variation>
    <location>
        <position position="71"/>
    </location>
</feature>
<feature type="strand" evidence="16">
    <location>
        <begin position="61"/>
        <end position="63"/>
    </location>
</feature>
<feature type="strand" evidence="16">
    <location>
        <begin position="65"/>
        <end position="68"/>
    </location>
</feature>
<feature type="strand" evidence="16">
    <location>
        <begin position="70"/>
        <end position="72"/>
    </location>
</feature>
<feature type="strand" evidence="16">
    <location>
        <begin position="74"/>
        <end position="77"/>
    </location>
</feature>
<dbReference type="EMBL" id="AY623756">
    <property type="protein sequence ID" value="AAT68755.1"/>
    <property type="molecule type" value="mRNA"/>
</dbReference>
<dbReference type="EMBL" id="AY623767">
    <property type="protein sequence ID" value="AAT68763.1"/>
    <property type="molecule type" value="Genomic_DNA"/>
</dbReference>
<dbReference type="EMBL" id="AC128185">
    <property type="status" value="NOT_ANNOTATED_CDS"/>
    <property type="molecule type" value="Genomic_DNA"/>
</dbReference>
<dbReference type="EMBL" id="CH473970">
    <property type="protein sequence ID" value="EDM08974.1"/>
    <property type="molecule type" value="Genomic_DNA"/>
</dbReference>
<dbReference type="RefSeq" id="NP_001028245.1">
    <property type="nucleotide sequence ID" value="NM_001033073.2"/>
</dbReference>
<dbReference type="PDB" id="5GWG">
    <property type="method" value="NMR"/>
    <property type="chains" value="A/B=57-87"/>
</dbReference>
<dbReference type="PDBsum" id="5GWG"/>
<dbReference type="BMRB" id="Q4JEI2"/>
<dbReference type="SMR" id="Q4JEI2"/>
<dbReference type="FunCoup" id="Q4JEI2">
    <property type="interactions" value="147"/>
</dbReference>
<dbReference type="STRING" id="10116.ENSRNOP00000047361"/>
<dbReference type="PaxDb" id="10116-ENSRNOP00000047361"/>
<dbReference type="Ensembl" id="ENSRNOT00000049394.4">
    <property type="protein sequence ID" value="ENSRNOP00000047361.2"/>
    <property type="gene ID" value="ENSRNOG00000029462.4"/>
</dbReference>
<dbReference type="GeneID" id="613220"/>
<dbReference type="KEGG" id="rno:613220"/>
<dbReference type="UCSC" id="RGD:1561398">
    <property type="organism name" value="rat"/>
</dbReference>
<dbReference type="AGR" id="RGD:1561398"/>
<dbReference type="CTD" id="613220"/>
<dbReference type="RGD" id="1561398">
    <property type="gene designation" value="Defal1"/>
</dbReference>
<dbReference type="eggNOG" id="ENOG502TF4X">
    <property type="taxonomic scope" value="Eukaryota"/>
</dbReference>
<dbReference type="GeneTree" id="ENSGT00940000153268"/>
<dbReference type="HOGENOM" id="CLU_160803_1_0_1"/>
<dbReference type="InParanoid" id="Q4JEI2"/>
<dbReference type="OMA" id="RRVCRNT"/>
<dbReference type="PhylomeDB" id="Q4JEI2"/>
<dbReference type="TreeFam" id="TF338414"/>
<dbReference type="Reactome" id="R-RNO-1461973">
    <property type="pathway name" value="Defensins"/>
</dbReference>
<dbReference type="Reactome" id="R-RNO-1462054">
    <property type="pathway name" value="Alpha-defensins"/>
</dbReference>
<dbReference type="Reactome" id="R-RNO-6798695">
    <property type="pathway name" value="Neutrophil degranulation"/>
</dbReference>
<dbReference type="PRO" id="PR:Q4JEI2"/>
<dbReference type="Proteomes" id="UP000002494">
    <property type="component" value="Chromosome 16"/>
</dbReference>
<dbReference type="Proteomes" id="UP000234681">
    <property type="component" value="Chromosome 16"/>
</dbReference>
<dbReference type="Bgee" id="ENSRNOG00000029462">
    <property type="expression patterns" value="Expressed in jejunum and 12 other cell types or tissues"/>
</dbReference>
<dbReference type="GO" id="GO:0005615">
    <property type="term" value="C:extracellular space"/>
    <property type="evidence" value="ECO:0000318"/>
    <property type="project" value="GO_Central"/>
</dbReference>
<dbReference type="GO" id="GO:0019731">
    <property type="term" value="P:antibacterial humoral response"/>
    <property type="evidence" value="ECO:0000318"/>
    <property type="project" value="GO_Central"/>
</dbReference>
<dbReference type="GO" id="GO:0061844">
    <property type="term" value="P:antimicrobial humoral immune response mediated by antimicrobial peptide"/>
    <property type="evidence" value="ECO:0000318"/>
    <property type="project" value="GO_Central"/>
</dbReference>
<dbReference type="GO" id="GO:0071222">
    <property type="term" value="P:cellular response to lipopolysaccharide"/>
    <property type="evidence" value="ECO:0000318"/>
    <property type="project" value="GO_Central"/>
</dbReference>
<dbReference type="GO" id="GO:0050829">
    <property type="term" value="P:defense response to Gram-negative bacterium"/>
    <property type="evidence" value="ECO:0000318"/>
    <property type="project" value="GO_Central"/>
</dbReference>
<dbReference type="GO" id="GO:0050830">
    <property type="term" value="P:defense response to Gram-positive bacterium"/>
    <property type="evidence" value="ECO:0000318"/>
    <property type="project" value="GO_Central"/>
</dbReference>
<dbReference type="GO" id="GO:0051673">
    <property type="term" value="P:disruption of plasma membrane integrity in another organism"/>
    <property type="evidence" value="ECO:0000318"/>
    <property type="project" value="GO_Central"/>
</dbReference>
<dbReference type="GO" id="GO:0002227">
    <property type="term" value="P:innate immune response in mucosa"/>
    <property type="evidence" value="ECO:0000318"/>
    <property type="project" value="GO_Central"/>
</dbReference>
<dbReference type="InterPro" id="IPR016327">
    <property type="entry name" value="Alpha-defensin"/>
</dbReference>
<dbReference type="InterPro" id="IPR002366">
    <property type="entry name" value="Alpha-defensin_N"/>
</dbReference>
<dbReference type="PANTHER" id="PTHR11876">
    <property type="entry name" value="ALPHA-DEFENSIN 1"/>
    <property type="match status" value="1"/>
</dbReference>
<dbReference type="PANTHER" id="PTHR11876:SF2">
    <property type="entry name" value="ALPHA-DEFENSIN 1-RELATED"/>
    <property type="match status" value="1"/>
</dbReference>
<dbReference type="Pfam" id="PF00879">
    <property type="entry name" value="Defensin_propep"/>
    <property type="match status" value="1"/>
</dbReference>
<dbReference type="PIRSF" id="PIRSF001875">
    <property type="entry name" value="Alpha-defensin"/>
    <property type="match status" value="1"/>
</dbReference>
<dbReference type="SMART" id="SM01418">
    <property type="entry name" value="Defensin_propep"/>
    <property type="match status" value="1"/>
</dbReference>
<accession>Q4JEI2</accession>
<protein>
    <recommendedName>
        <fullName evidence="14">Defensin alpha-like protein 1</fullName>
    </recommendedName>
    <alternativeName>
        <fullName evidence="6">Defensin alpha-related sequence 1</fullName>
    </alternativeName>
    <alternativeName>
        <fullName evidence="7">Rattusin</fullName>
    </alternativeName>
</protein>
<reference evidence="11" key="1">
    <citation type="journal article" date="2004" name="Physiol. Genomics">
        <title>Rapid evolution and diversification of mammalian alpha-defensins as revealed by comparative analysis of rodent and primate genes.</title>
        <authorList>
            <person name="Patil A."/>
            <person name="Hughes A.L."/>
            <person name="Zhang G."/>
        </authorList>
    </citation>
    <scope>NUCLEOTIDE SEQUENCE [GENOMIC DNA / MRNA]</scope>
    <scope>TISSUE SPECIFICITY</scope>
</reference>
<reference evidence="13" key="2">
    <citation type="journal article" date="2004" name="Nature">
        <title>Genome sequence of the Brown Norway rat yields insights into mammalian evolution.</title>
        <authorList>
            <person name="Gibbs R.A."/>
            <person name="Weinstock G.M."/>
            <person name="Metzker M.L."/>
            <person name="Muzny D.M."/>
            <person name="Sodergren E.J."/>
            <person name="Scherer S."/>
            <person name="Scott G."/>
            <person name="Steffen D."/>
            <person name="Worley K.C."/>
            <person name="Burch P.E."/>
            <person name="Okwuonu G."/>
            <person name="Hines S."/>
            <person name="Lewis L."/>
            <person name="Deramo C."/>
            <person name="Delgado O."/>
            <person name="Dugan-Rocha S."/>
            <person name="Miner G."/>
            <person name="Morgan M."/>
            <person name="Hawes A."/>
            <person name="Gill R."/>
            <person name="Holt R.A."/>
            <person name="Adams M.D."/>
            <person name="Amanatides P.G."/>
            <person name="Baden-Tillson H."/>
            <person name="Barnstead M."/>
            <person name="Chin S."/>
            <person name="Evans C.A."/>
            <person name="Ferriera S."/>
            <person name="Fosler C."/>
            <person name="Glodek A."/>
            <person name="Gu Z."/>
            <person name="Jennings D."/>
            <person name="Kraft C.L."/>
            <person name="Nguyen T."/>
            <person name="Pfannkoch C.M."/>
            <person name="Sitter C."/>
            <person name="Sutton G.G."/>
            <person name="Venter J.C."/>
            <person name="Woodage T."/>
            <person name="Smith D."/>
            <person name="Lee H.-M."/>
            <person name="Gustafson E."/>
            <person name="Cahill P."/>
            <person name="Kana A."/>
            <person name="Doucette-Stamm L."/>
            <person name="Weinstock K."/>
            <person name="Fechtel K."/>
            <person name="Weiss R.B."/>
            <person name="Dunn D.M."/>
            <person name="Green E.D."/>
            <person name="Blakesley R.W."/>
            <person name="Bouffard G.G."/>
            <person name="De Jong P.J."/>
            <person name="Osoegawa K."/>
            <person name="Zhu B."/>
            <person name="Marra M."/>
            <person name="Schein J."/>
            <person name="Bosdet I."/>
            <person name="Fjell C."/>
            <person name="Jones S."/>
            <person name="Krzywinski M."/>
            <person name="Mathewson C."/>
            <person name="Siddiqui A."/>
            <person name="Wye N."/>
            <person name="McPherson J."/>
            <person name="Zhao S."/>
            <person name="Fraser C.M."/>
            <person name="Shetty J."/>
            <person name="Shatsman S."/>
            <person name="Geer K."/>
            <person name="Chen Y."/>
            <person name="Abramzon S."/>
            <person name="Nierman W.C."/>
            <person name="Havlak P.H."/>
            <person name="Chen R."/>
            <person name="Durbin K.J."/>
            <person name="Egan A."/>
            <person name="Ren Y."/>
            <person name="Song X.-Z."/>
            <person name="Li B."/>
            <person name="Liu Y."/>
            <person name="Qin X."/>
            <person name="Cawley S."/>
            <person name="Cooney A.J."/>
            <person name="D'Souza L.M."/>
            <person name="Martin K."/>
            <person name="Wu J.Q."/>
            <person name="Gonzalez-Garay M.L."/>
            <person name="Jackson A.R."/>
            <person name="Kalafus K.J."/>
            <person name="McLeod M.P."/>
            <person name="Milosavljevic A."/>
            <person name="Virk D."/>
            <person name="Volkov A."/>
            <person name="Wheeler D.A."/>
            <person name="Zhang Z."/>
            <person name="Bailey J.A."/>
            <person name="Eichler E.E."/>
            <person name="Tuzun E."/>
            <person name="Birney E."/>
            <person name="Mongin E."/>
            <person name="Ureta-Vidal A."/>
            <person name="Woodwark C."/>
            <person name="Zdobnov E."/>
            <person name="Bork P."/>
            <person name="Suyama M."/>
            <person name="Torrents D."/>
            <person name="Alexandersson M."/>
            <person name="Trask B.J."/>
            <person name="Young J.M."/>
            <person name="Huang H."/>
            <person name="Wang H."/>
            <person name="Xing H."/>
            <person name="Daniels S."/>
            <person name="Gietzen D."/>
            <person name="Schmidt J."/>
            <person name="Stevens K."/>
            <person name="Vitt U."/>
            <person name="Wingrove J."/>
            <person name="Camara F."/>
            <person name="Mar Alba M."/>
            <person name="Abril J.F."/>
            <person name="Guigo R."/>
            <person name="Smit A."/>
            <person name="Dubchak I."/>
            <person name="Rubin E.M."/>
            <person name="Couronne O."/>
            <person name="Poliakov A."/>
            <person name="Huebner N."/>
            <person name="Ganten D."/>
            <person name="Goesele C."/>
            <person name="Hummel O."/>
            <person name="Kreitler T."/>
            <person name="Lee Y.-A."/>
            <person name="Monti J."/>
            <person name="Schulz H."/>
            <person name="Zimdahl H."/>
            <person name="Himmelbauer H."/>
            <person name="Lehrach H."/>
            <person name="Jacob H.J."/>
            <person name="Bromberg S."/>
            <person name="Gullings-Handley J."/>
            <person name="Jensen-Seaman M.I."/>
            <person name="Kwitek A.E."/>
            <person name="Lazar J."/>
            <person name="Pasko D."/>
            <person name="Tonellato P.J."/>
            <person name="Twigger S."/>
            <person name="Ponting C.P."/>
            <person name="Duarte J.M."/>
            <person name="Rice S."/>
            <person name="Goodstadt L."/>
            <person name="Beatson S.A."/>
            <person name="Emes R.D."/>
            <person name="Winter E.E."/>
            <person name="Webber C."/>
            <person name="Brandt P."/>
            <person name="Nyakatura G."/>
            <person name="Adetobi M."/>
            <person name="Chiaromonte F."/>
            <person name="Elnitski L."/>
            <person name="Eswara P."/>
            <person name="Hardison R.C."/>
            <person name="Hou M."/>
            <person name="Kolbe D."/>
            <person name="Makova K."/>
            <person name="Miller W."/>
            <person name="Nekrutenko A."/>
            <person name="Riemer C."/>
            <person name="Schwartz S."/>
            <person name="Taylor J."/>
            <person name="Yang S."/>
            <person name="Zhang Y."/>
            <person name="Lindpaintner K."/>
            <person name="Andrews T.D."/>
            <person name="Caccamo M."/>
            <person name="Clamp M."/>
            <person name="Clarke L."/>
            <person name="Curwen V."/>
            <person name="Durbin R.M."/>
            <person name="Eyras E."/>
            <person name="Searle S.M."/>
            <person name="Cooper G.M."/>
            <person name="Batzoglou S."/>
            <person name="Brudno M."/>
            <person name="Sidow A."/>
            <person name="Stone E.A."/>
            <person name="Payseur B.A."/>
            <person name="Bourque G."/>
            <person name="Lopez-Otin C."/>
            <person name="Puente X.S."/>
            <person name="Chakrabarti K."/>
            <person name="Chatterji S."/>
            <person name="Dewey C."/>
            <person name="Pachter L."/>
            <person name="Bray N."/>
            <person name="Yap V.B."/>
            <person name="Caspi A."/>
            <person name="Tesler G."/>
            <person name="Pevzner P.A."/>
            <person name="Haussler D."/>
            <person name="Roskin K.M."/>
            <person name="Baertsch R."/>
            <person name="Clawson H."/>
            <person name="Furey T.S."/>
            <person name="Hinrichs A.S."/>
            <person name="Karolchik D."/>
            <person name="Kent W.J."/>
            <person name="Rosenbloom K.R."/>
            <person name="Trumbower H."/>
            <person name="Weirauch M."/>
            <person name="Cooper D.N."/>
            <person name="Stenson P.D."/>
            <person name="Ma B."/>
            <person name="Brent M."/>
            <person name="Arumugam M."/>
            <person name="Shteynberg D."/>
            <person name="Copley R.R."/>
            <person name="Taylor M.S."/>
            <person name="Riethman H."/>
            <person name="Mudunuri U."/>
            <person name="Peterson J."/>
            <person name="Guyer M."/>
            <person name="Felsenfeld A."/>
            <person name="Old S."/>
            <person name="Mockrin S."/>
            <person name="Collins F.S."/>
        </authorList>
    </citation>
    <scope>NUCLEOTIDE SEQUENCE [LARGE SCALE GENOMIC DNA]</scope>
    <source>
        <strain>Brown Norway</strain>
    </source>
</reference>
<reference evidence="12" key="3">
    <citation type="submission" date="2005-09" db="EMBL/GenBank/DDBJ databases">
        <authorList>
            <person name="Mural R.J."/>
            <person name="Adams M.D."/>
            <person name="Myers E.W."/>
            <person name="Smith H.O."/>
            <person name="Venter J.C."/>
        </authorList>
    </citation>
    <scope>NUCLEOTIDE SEQUENCE [LARGE SCALE GENOMIC DNA]</scope>
</reference>
<reference evidence="8" key="4">
    <citation type="journal article" date="2013" name="Antimicrob. Agents Chemother.">
        <title>Rattusin, an intestinal alpha-defensin-related peptide in rats with a unique cysteine spacing pattern and salt-insensitive antibacterial activities.</title>
        <authorList>
            <person name="Patil A.A."/>
            <person name="Ouellette A.J."/>
            <person name="Lu W."/>
            <person name="Zhang G."/>
        </authorList>
    </citation>
    <scope>SYNTHESIS OF 57-87</scope>
    <scope>FUNCTION</scope>
    <scope>SUBUNIT</scope>
    <scope>TISSUE SPECIFICITY</scope>
</reference>
<reference evidence="15" key="5">
    <citation type="journal article" date="2017" name="Sci. Rep.">
        <title>Rattusin structure reveals a novel defensin scaffold formed by intermolecular disulfide exchanges.</title>
        <authorList>
            <person name="Min H.J."/>
            <person name="Yun H."/>
            <person name="Ji S."/>
            <person name="Rajasekaran G."/>
            <person name="Kim J.I."/>
            <person name="Kim J.S."/>
            <person name="Shin S.Y."/>
            <person name="Lee C.W."/>
        </authorList>
    </citation>
    <scope>STRUCTURE BY NMR OF 57-87</scope>
    <scope>FUNCTION</scope>
    <scope>SUBUNIT</scope>
    <scope>DISULFIDE BONDS</scope>
    <scope>MUTAGENESIS OF CYS-71</scope>
</reference>
<proteinExistence type="evidence at protein level"/>
<sequence>MKTLILLSALVLLALQVQADPIQEAEEETKTEEQPADEDQDVSVSFEGPEASAVQDLRVRRTLQCSCRRVCRNTCSCIRLSRSTYAS</sequence>
<evidence type="ECO:0000255" key="1"/>
<evidence type="ECO:0000256" key="2">
    <source>
        <dbReference type="SAM" id="MobiDB-lite"/>
    </source>
</evidence>
<evidence type="ECO:0000269" key="3">
    <source>
    </source>
</evidence>
<evidence type="ECO:0000269" key="4">
    <source>
    </source>
</evidence>
<evidence type="ECO:0000269" key="5">
    <source>
    </source>
</evidence>
<evidence type="ECO:0000303" key="6">
    <source>
    </source>
</evidence>
<evidence type="ECO:0000303" key="7">
    <source>
    </source>
</evidence>
<evidence type="ECO:0000305" key="8"/>
<evidence type="ECO:0000305" key="9">
    <source>
    </source>
</evidence>
<evidence type="ECO:0000305" key="10">
    <source>
    </source>
</evidence>
<evidence type="ECO:0000312" key="11">
    <source>
        <dbReference type="EMBL" id="AAT68755.1"/>
    </source>
</evidence>
<evidence type="ECO:0000312" key="12">
    <source>
        <dbReference type="EMBL" id="EDM08974.1"/>
    </source>
</evidence>
<evidence type="ECO:0000312" key="13">
    <source>
        <dbReference type="Proteomes" id="UP000002494"/>
    </source>
</evidence>
<evidence type="ECO:0000312" key="14">
    <source>
        <dbReference type="RGD" id="1561398"/>
    </source>
</evidence>
<evidence type="ECO:0007744" key="15">
    <source>
        <dbReference type="PDB" id="5GWG"/>
    </source>
</evidence>
<evidence type="ECO:0007829" key="16">
    <source>
        <dbReference type="PDB" id="5GWG"/>
    </source>
</evidence>
<name>DFAL1_RAT</name>